<reference key="1">
    <citation type="journal article" date="2004" name="Nature">
        <title>Genome evolution in yeasts.</title>
        <authorList>
            <person name="Dujon B."/>
            <person name="Sherman D."/>
            <person name="Fischer G."/>
            <person name="Durrens P."/>
            <person name="Casaregola S."/>
            <person name="Lafontaine I."/>
            <person name="de Montigny J."/>
            <person name="Marck C."/>
            <person name="Neuveglise C."/>
            <person name="Talla E."/>
            <person name="Goffard N."/>
            <person name="Frangeul L."/>
            <person name="Aigle M."/>
            <person name="Anthouard V."/>
            <person name="Babour A."/>
            <person name="Barbe V."/>
            <person name="Barnay S."/>
            <person name="Blanchin S."/>
            <person name="Beckerich J.-M."/>
            <person name="Beyne E."/>
            <person name="Bleykasten C."/>
            <person name="Boisrame A."/>
            <person name="Boyer J."/>
            <person name="Cattolico L."/>
            <person name="Confanioleri F."/>
            <person name="de Daruvar A."/>
            <person name="Despons L."/>
            <person name="Fabre E."/>
            <person name="Fairhead C."/>
            <person name="Ferry-Dumazet H."/>
            <person name="Groppi A."/>
            <person name="Hantraye F."/>
            <person name="Hennequin C."/>
            <person name="Jauniaux N."/>
            <person name="Joyet P."/>
            <person name="Kachouri R."/>
            <person name="Kerrest A."/>
            <person name="Koszul R."/>
            <person name="Lemaire M."/>
            <person name="Lesur I."/>
            <person name="Ma L."/>
            <person name="Muller H."/>
            <person name="Nicaud J.-M."/>
            <person name="Nikolski M."/>
            <person name="Oztas S."/>
            <person name="Ozier-Kalogeropoulos O."/>
            <person name="Pellenz S."/>
            <person name="Potier S."/>
            <person name="Richard G.-F."/>
            <person name="Straub M.-L."/>
            <person name="Suleau A."/>
            <person name="Swennen D."/>
            <person name="Tekaia F."/>
            <person name="Wesolowski-Louvel M."/>
            <person name="Westhof E."/>
            <person name="Wirth B."/>
            <person name="Zeniou-Meyer M."/>
            <person name="Zivanovic Y."/>
            <person name="Bolotin-Fukuhara M."/>
            <person name="Thierry A."/>
            <person name="Bouchier C."/>
            <person name="Caudron B."/>
            <person name="Scarpelli C."/>
            <person name="Gaillardin C."/>
            <person name="Weissenbach J."/>
            <person name="Wincker P."/>
            <person name="Souciet J.-L."/>
        </authorList>
    </citation>
    <scope>NUCLEOTIDE SEQUENCE [LARGE SCALE GENOMIC DNA]</scope>
    <source>
        <strain>ATCC 2001 / BCRC 20586 / JCM 3761 / NBRC 0622 / NRRL Y-65 / CBS 138</strain>
    </source>
</reference>
<proteinExistence type="inferred from homology"/>
<organism>
    <name type="scientific">Candida glabrata (strain ATCC 2001 / BCRC 20586 / JCM 3761 / NBRC 0622 / NRRL Y-65 / CBS 138)</name>
    <name type="common">Yeast</name>
    <name type="synonym">Nakaseomyces glabratus</name>
    <dbReference type="NCBI Taxonomy" id="284593"/>
    <lineage>
        <taxon>Eukaryota</taxon>
        <taxon>Fungi</taxon>
        <taxon>Dikarya</taxon>
        <taxon>Ascomycota</taxon>
        <taxon>Saccharomycotina</taxon>
        <taxon>Saccharomycetes</taxon>
        <taxon>Saccharomycetales</taxon>
        <taxon>Saccharomycetaceae</taxon>
        <taxon>Nakaseomyces</taxon>
    </lineage>
</organism>
<evidence type="ECO:0000250" key="1">
    <source>
        <dbReference type="UniProtKB" id="Q04431"/>
    </source>
</evidence>
<evidence type="ECO:0000255" key="2"/>
<evidence type="ECO:0000305" key="3"/>
<accession>Q6FSC7</accession>
<feature type="chain" id="PRO_0000408561" description="Outer kinetochore KNL1 complex subunit KRE28">
    <location>
        <begin position="1"/>
        <end position="359"/>
    </location>
</feature>
<feature type="coiled-coil region" evidence="2">
    <location>
        <begin position="59"/>
        <end position="81"/>
    </location>
</feature>
<feature type="coiled-coil region" evidence="2">
    <location>
        <begin position="111"/>
        <end position="132"/>
    </location>
</feature>
<feature type="coiled-coil region" evidence="2">
    <location>
        <begin position="210"/>
        <end position="239"/>
    </location>
</feature>
<name>ZWINT_CANGA</name>
<sequence length="359" mass="42323">MEAQLHELQEEITRSSDLVLTEQDKRLQGTLREIDQSIRKLIETSDYLKLSGDADSLIDIKQLEVKSRELDSLMDLLRKLYWREESLDLFLKYTINSDAEQVPVFSDTDPKYQSLQDEVSHLRDDVMTVKNQEIDQITGEILQVAHEITEKQDQVNMLYLETTNELDKCWELLDEWQRLQDDQRITKNEDNSNRKDTELNAMEECYEEWKTLEELAVLNDNLQKQIDELEKVDNKAINSTQLAEESIVNTVQLNDLIDMWKRRIIASIHEDISEIVLYPYSRKLQLRVANRYTIIIQLDKHQTHDGKSTIHDIDLFTEQDSRIIPMRELRKQVLQECKGHSNILQALKNIINRVINNDN</sequence>
<keyword id="KW-0137">Centromere</keyword>
<keyword id="KW-0158">Chromosome</keyword>
<keyword id="KW-0175">Coiled coil</keyword>
<keyword id="KW-0995">Kinetochore</keyword>
<keyword id="KW-0539">Nucleus</keyword>
<keyword id="KW-1185">Reference proteome</keyword>
<protein>
    <recommendedName>
        <fullName evidence="3">Outer kinetochore KNL1 complex subunit KRE28</fullName>
    </recommendedName>
    <alternativeName>
        <fullName>Spindle pole body component KRE28</fullName>
    </alternativeName>
</protein>
<comment type="function">
    <text evidence="1">Acts as a component of the outer kinetochore KNL1 complex that facilitates microtubule-kinetochore interactions and the spindle assembly checkpoint. Kinetochores, consisting of a centromere-associated inner segment and a microtubule-contacting outer segment, play a crucial role in chromosome segregation by mediating the physical connection between centromeric DNA and spindle microtubules. The outer kinetochore is made up of the ten-subunit KMN network, comprising the MIS12, NDC80 and KNL1 complexes, and auxiliary microtubule-associated components; together they connect the outer kinetochore with the inner kinetochore, bind microtubules, and mediate interactions with mitotic checkpoint proteins that delay anaphase until chromosomes are bioriented on the spindle.</text>
</comment>
<comment type="subunit">
    <text evidence="1">Component of the KNL1/SPC105 complex composed of SPC105 and KRE28. Part of the ten-subunit outer kinetochore KMN network that includes the KNL1, MIS12 and NDC80 complexes.</text>
</comment>
<comment type="subcellular location">
    <subcellularLocation>
        <location evidence="1">Nucleus</location>
    </subcellularLocation>
    <subcellularLocation>
        <location evidence="1">Chromosome</location>
        <location evidence="1">Centromere</location>
        <location evidence="1">Kinetochore</location>
    </subcellularLocation>
</comment>
<comment type="similarity">
    <text evidence="3">Belongs to the KRE28 family.</text>
</comment>
<dbReference type="EMBL" id="CR380954">
    <property type="protein sequence ID" value="CAG59800.1"/>
    <property type="molecule type" value="Genomic_DNA"/>
</dbReference>
<dbReference type="RefSeq" id="XP_446867.1">
    <property type="nucleotide sequence ID" value="XM_446867.1"/>
</dbReference>
<dbReference type="SMR" id="Q6FSC7"/>
<dbReference type="FunCoup" id="Q6FSC7">
    <property type="interactions" value="31"/>
</dbReference>
<dbReference type="STRING" id="284593.Q6FSC7"/>
<dbReference type="EnsemblFungi" id="CAGL0H01573g-T">
    <property type="protein sequence ID" value="CAGL0H01573g-T-p1"/>
    <property type="gene ID" value="CAGL0H01573g"/>
</dbReference>
<dbReference type="KEGG" id="cgr:2888670"/>
<dbReference type="CGD" id="CAL0130607">
    <property type="gene designation" value="CAGL0H01573g"/>
</dbReference>
<dbReference type="VEuPathDB" id="FungiDB:CAGL0H01573g"/>
<dbReference type="eggNOG" id="ENOG502S19U">
    <property type="taxonomic scope" value="Eukaryota"/>
</dbReference>
<dbReference type="HOGENOM" id="CLU_062083_0_0_1"/>
<dbReference type="InParanoid" id="Q6FSC7"/>
<dbReference type="OMA" id="GNEIDEC"/>
<dbReference type="Proteomes" id="UP000002428">
    <property type="component" value="Chromosome H"/>
</dbReference>
<dbReference type="GO" id="GO:0000776">
    <property type="term" value="C:kinetochore"/>
    <property type="evidence" value="ECO:0000250"/>
    <property type="project" value="UniProtKB"/>
</dbReference>
<dbReference type="GO" id="GO:0180019">
    <property type="term" value="C:Knl1/Spc105 complex"/>
    <property type="evidence" value="ECO:0000250"/>
    <property type="project" value="UniProtKB"/>
</dbReference>
<dbReference type="GO" id="GO:0005634">
    <property type="term" value="C:nucleus"/>
    <property type="evidence" value="ECO:0007669"/>
    <property type="project" value="UniProtKB-SubCell"/>
</dbReference>
<dbReference type="GO" id="GO:0031619">
    <property type="term" value="P:homologous chromosome orientation in meiotic metaphase I"/>
    <property type="evidence" value="ECO:0000250"/>
    <property type="project" value="UniProtKB"/>
</dbReference>
<dbReference type="GO" id="GO:1905325">
    <property type="term" value="P:regulation of meiosis I spindle assembly checkpoint"/>
    <property type="evidence" value="ECO:0000250"/>
    <property type="project" value="UniProtKB"/>
</dbReference>
<dbReference type="InterPro" id="IPR031361">
    <property type="entry name" value="Kre28"/>
</dbReference>
<dbReference type="Pfam" id="PF17097">
    <property type="entry name" value="Kre28"/>
    <property type="match status" value="1"/>
</dbReference>
<gene>
    <name type="primary">KRE28</name>
    <name type="ordered locus">CAGL0H01573g</name>
</gene>